<organism>
    <name type="scientific">Oleidesulfovibrio alaskensis (strain ATCC BAA-1058 / DSM 17464 / G20)</name>
    <name type="common">Desulfovibrio alaskensis</name>
    <dbReference type="NCBI Taxonomy" id="207559"/>
    <lineage>
        <taxon>Bacteria</taxon>
        <taxon>Pseudomonadati</taxon>
        <taxon>Thermodesulfobacteriota</taxon>
        <taxon>Desulfovibrionia</taxon>
        <taxon>Desulfovibrionales</taxon>
        <taxon>Desulfovibrionaceae</taxon>
        <taxon>Oleidesulfovibrio</taxon>
    </lineage>
</organism>
<reference key="1">
    <citation type="journal article" date="2011" name="J. Bacteriol.">
        <title>Complete genome sequence and updated annotation of Desulfovibrio alaskensis G20.</title>
        <authorList>
            <person name="Hauser L.J."/>
            <person name="Land M.L."/>
            <person name="Brown S.D."/>
            <person name="Larimer F."/>
            <person name="Keller K.L."/>
            <person name="Rapp-Giles B.J."/>
            <person name="Price M.N."/>
            <person name="Lin M."/>
            <person name="Bruce D.C."/>
            <person name="Detter J.C."/>
            <person name="Tapia R."/>
            <person name="Han C.S."/>
            <person name="Goodwin L.A."/>
            <person name="Cheng J.F."/>
            <person name="Pitluck S."/>
            <person name="Copeland A."/>
            <person name="Lucas S."/>
            <person name="Nolan M."/>
            <person name="Lapidus A.L."/>
            <person name="Palumbo A.V."/>
            <person name="Wall J.D."/>
        </authorList>
    </citation>
    <scope>NUCLEOTIDE SEQUENCE [LARGE SCALE GENOMIC DNA]</scope>
    <source>
        <strain>ATCC BAA-1058 / DSM 17464 / G20</strain>
    </source>
</reference>
<proteinExistence type="inferred from homology"/>
<sequence length="65" mass="7572">MPKIKTRRCAAKRFSVTGSGKFKRRRKNMRHILTKKASKRKMQLGQPALVDKTNEKAVKRMLPYA</sequence>
<evidence type="ECO:0000255" key="1">
    <source>
        <dbReference type="HAMAP-Rule" id="MF_00514"/>
    </source>
</evidence>
<evidence type="ECO:0000305" key="2"/>
<name>RL35_OLEA2</name>
<keyword id="KW-1185">Reference proteome</keyword>
<keyword id="KW-0687">Ribonucleoprotein</keyword>
<keyword id="KW-0689">Ribosomal protein</keyword>
<dbReference type="EMBL" id="CP000112">
    <property type="protein sequence ID" value="ABB39433.1"/>
    <property type="molecule type" value="Genomic_DNA"/>
</dbReference>
<dbReference type="RefSeq" id="WP_011368469.1">
    <property type="nucleotide sequence ID" value="NC_007519.1"/>
</dbReference>
<dbReference type="SMR" id="Q30Y13"/>
<dbReference type="STRING" id="207559.Dde_2637"/>
<dbReference type="KEGG" id="dde:Dde_2637"/>
<dbReference type="eggNOG" id="COG0291">
    <property type="taxonomic scope" value="Bacteria"/>
</dbReference>
<dbReference type="HOGENOM" id="CLU_169643_1_1_7"/>
<dbReference type="Proteomes" id="UP000002710">
    <property type="component" value="Chromosome"/>
</dbReference>
<dbReference type="GO" id="GO:0022625">
    <property type="term" value="C:cytosolic large ribosomal subunit"/>
    <property type="evidence" value="ECO:0007669"/>
    <property type="project" value="TreeGrafter"/>
</dbReference>
<dbReference type="GO" id="GO:0003735">
    <property type="term" value="F:structural constituent of ribosome"/>
    <property type="evidence" value="ECO:0007669"/>
    <property type="project" value="InterPro"/>
</dbReference>
<dbReference type="GO" id="GO:0006412">
    <property type="term" value="P:translation"/>
    <property type="evidence" value="ECO:0007669"/>
    <property type="project" value="UniProtKB-UniRule"/>
</dbReference>
<dbReference type="FunFam" id="4.10.410.60:FF:000001">
    <property type="entry name" value="50S ribosomal protein L35"/>
    <property type="match status" value="1"/>
</dbReference>
<dbReference type="Gene3D" id="4.10.410.60">
    <property type="match status" value="1"/>
</dbReference>
<dbReference type="HAMAP" id="MF_00514">
    <property type="entry name" value="Ribosomal_bL35"/>
    <property type="match status" value="1"/>
</dbReference>
<dbReference type="InterPro" id="IPR001706">
    <property type="entry name" value="Ribosomal_bL35"/>
</dbReference>
<dbReference type="InterPro" id="IPR021137">
    <property type="entry name" value="Ribosomal_bL35-like"/>
</dbReference>
<dbReference type="InterPro" id="IPR037229">
    <property type="entry name" value="Ribosomal_bL35_sf"/>
</dbReference>
<dbReference type="NCBIfam" id="TIGR00001">
    <property type="entry name" value="rpmI_bact"/>
    <property type="match status" value="1"/>
</dbReference>
<dbReference type="PANTHER" id="PTHR33343">
    <property type="entry name" value="54S RIBOSOMAL PROTEIN BL35M"/>
    <property type="match status" value="1"/>
</dbReference>
<dbReference type="PANTHER" id="PTHR33343:SF1">
    <property type="entry name" value="LARGE RIBOSOMAL SUBUNIT PROTEIN BL35M"/>
    <property type="match status" value="1"/>
</dbReference>
<dbReference type="Pfam" id="PF01632">
    <property type="entry name" value="Ribosomal_L35p"/>
    <property type="match status" value="1"/>
</dbReference>
<dbReference type="PRINTS" id="PR00064">
    <property type="entry name" value="RIBOSOMALL35"/>
</dbReference>
<dbReference type="SUPFAM" id="SSF143034">
    <property type="entry name" value="L35p-like"/>
    <property type="match status" value="1"/>
</dbReference>
<accession>Q30Y13</accession>
<gene>
    <name evidence="1" type="primary">rpmI</name>
    <name type="ordered locus">Dde_2637</name>
</gene>
<comment type="similarity">
    <text evidence="1">Belongs to the bacterial ribosomal protein bL35 family.</text>
</comment>
<feature type="chain" id="PRO_0000258672" description="Large ribosomal subunit protein bL35">
    <location>
        <begin position="1"/>
        <end position="65"/>
    </location>
</feature>
<protein>
    <recommendedName>
        <fullName evidence="1">Large ribosomal subunit protein bL35</fullName>
    </recommendedName>
    <alternativeName>
        <fullName evidence="2">50S ribosomal protein L35</fullName>
    </alternativeName>
</protein>